<accession>P48242</accession>
<protein>
    <recommendedName>
        <fullName evidence="4">Glutamate-binding protein GluB</fullName>
    </recommendedName>
    <alternativeName>
        <fullName evidence="6">Glutamate uptake system protein GluB</fullName>
    </alternativeName>
</protein>
<gene>
    <name evidence="5" type="primary">gluB</name>
    <name type="ordered locus">Cgl1951</name>
    <name type="ordered locus">cg2137</name>
</gene>
<dbReference type="EMBL" id="X81191">
    <property type="protein sequence ID" value="CAA57061.1"/>
    <property type="molecule type" value="Genomic_DNA"/>
</dbReference>
<dbReference type="EMBL" id="BA000036">
    <property type="protein sequence ID" value="BAB99344.1"/>
    <property type="molecule type" value="Genomic_DNA"/>
</dbReference>
<dbReference type="EMBL" id="BX927153">
    <property type="protein sequence ID" value="CAF20292.1"/>
    <property type="molecule type" value="Genomic_DNA"/>
</dbReference>
<dbReference type="RefSeq" id="NP_601158.1">
    <property type="nucleotide sequence ID" value="NC_003450.3"/>
</dbReference>
<dbReference type="RefSeq" id="WP_011014779.1">
    <property type="nucleotide sequence ID" value="NC_006958.1"/>
</dbReference>
<dbReference type="SMR" id="P48242"/>
<dbReference type="STRING" id="196627.cg2137"/>
<dbReference type="TCDB" id="3.A.1.3.9">
    <property type="family name" value="the atp-binding cassette (abc) superfamily"/>
</dbReference>
<dbReference type="GeneID" id="1019908"/>
<dbReference type="KEGG" id="cgb:cg2137"/>
<dbReference type="KEGG" id="cgl:Cgl1951"/>
<dbReference type="PATRIC" id="fig|196627.13.peg.1889"/>
<dbReference type="eggNOG" id="COG0834">
    <property type="taxonomic scope" value="Bacteria"/>
</dbReference>
<dbReference type="HOGENOM" id="CLU_019602_18_4_11"/>
<dbReference type="OrthoDB" id="9807888at2"/>
<dbReference type="BioCyc" id="CORYNE:G18NG-11543-MONOMER"/>
<dbReference type="Proteomes" id="UP000000582">
    <property type="component" value="Chromosome"/>
</dbReference>
<dbReference type="Proteomes" id="UP000001009">
    <property type="component" value="Chromosome"/>
</dbReference>
<dbReference type="GO" id="GO:0005576">
    <property type="term" value="C:extracellular region"/>
    <property type="evidence" value="ECO:0007669"/>
    <property type="project" value="TreeGrafter"/>
</dbReference>
<dbReference type="GO" id="GO:0030288">
    <property type="term" value="C:outer membrane-bounded periplasmic space"/>
    <property type="evidence" value="ECO:0007669"/>
    <property type="project" value="TreeGrafter"/>
</dbReference>
<dbReference type="GO" id="GO:0005886">
    <property type="term" value="C:plasma membrane"/>
    <property type="evidence" value="ECO:0007669"/>
    <property type="project" value="UniProtKB-SubCell"/>
</dbReference>
<dbReference type="GO" id="GO:0006865">
    <property type="term" value="P:amino acid transport"/>
    <property type="evidence" value="ECO:0007669"/>
    <property type="project" value="UniProtKB-KW"/>
</dbReference>
<dbReference type="CDD" id="cd13690">
    <property type="entry name" value="PBP2_GluB"/>
    <property type="match status" value="1"/>
</dbReference>
<dbReference type="Gene3D" id="3.40.190.10">
    <property type="entry name" value="Periplasmic binding protein-like II"/>
    <property type="match status" value="2"/>
</dbReference>
<dbReference type="InterPro" id="IPR051455">
    <property type="entry name" value="Bact_solute-bind_prot3"/>
</dbReference>
<dbReference type="InterPro" id="IPR018313">
    <property type="entry name" value="SBP_3_CS"/>
</dbReference>
<dbReference type="InterPro" id="IPR001638">
    <property type="entry name" value="Solute-binding_3/MltF_N"/>
</dbReference>
<dbReference type="PANTHER" id="PTHR30085:SF6">
    <property type="entry name" value="ABC TRANSPORTER GLUTAMINE-BINDING PROTEIN GLNH"/>
    <property type="match status" value="1"/>
</dbReference>
<dbReference type="PANTHER" id="PTHR30085">
    <property type="entry name" value="AMINO ACID ABC TRANSPORTER PERMEASE"/>
    <property type="match status" value="1"/>
</dbReference>
<dbReference type="Pfam" id="PF00497">
    <property type="entry name" value="SBP_bac_3"/>
    <property type="match status" value="1"/>
</dbReference>
<dbReference type="SMART" id="SM00062">
    <property type="entry name" value="PBPb"/>
    <property type="match status" value="1"/>
</dbReference>
<dbReference type="SUPFAM" id="SSF53850">
    <property type="entry name" value="Periplasmic binding protein-like II"/>
    <property type="match status" value="1"/>
</dbReference>
<dbReference type="PROSITE" id="PS51257">
    <property type="entry name" value="PROKAR_LIPOPROTEIN"/>
    <property type="match status" value="1"/>
</dbReference>
<dbReference type="PROSITE" id="PS01039">
    <property type="entry name" value="SBP_BACTERIAL_3"/>
    <property type="match status" value="1"/>
</dbReference>
<comment type="function">
    <text evidence="2 3">Part of the ABC transporter complex GluABCD involved in glutamate uptake (PubMed:7868586). Binds glutamate with a high affinity (PubMed:32593757). Also binds aspartate with high affinity, suggesting that GluB could be involved in the transport of both amino acid residues into the cell (PubMed:32593757).</text>
</comment>
<comment type="activity regulation">
    <text evidence="2">Binding of glutamate or asparatate induces a higher thermal stability of the protein structure.</text>
</comment>
<comment type="subunit">
    <text evidence="7">The complex is composed of two ATP-binding proteins (GluA), two transmembrane proteins (GluC and GluD) and a solute-binding protein (GluB).</text>
</comment>
<comment type="subcellular location">
    <subcellularLocation>
        <location evidence="1">Cell membrane</location>
        <topology evidence="1">Lipid-anchor</topology>
    </subcellularLocation>
</comment>
<comment type="disruption phenotype">
    <text evidence="3">Deletion of the gluABCD cluster almost abolishes glutamate uptake activity.</text>
</comment>
<comment type="similarity">
    <text evidence="6">Belongs to the bacterial solute-binding protein 3 family.</text>
</comment>
<feature type="signal peptide" evidence="1">
    <location>
        <begin position="1"/>
        <end position="26"/>
    </location>
</feature>
<feature type="chain" id="PRO_0000031761" description="Glutamate-binding protein GluB">
    <location>
        <begin position="27"/>
        <end position="295"/>
    </location>
</feature>
<feature type="lipid moiety-binding region" description="N-palmitoyl cysteine" evidence="1">
    <location>
        <position position="27"/>
    </location>
</feature>
<feature type="lipid moiety-binding region" description="S-diacylglycerol cysteine" evidence="1">
    <location>
        <position position="27"/>
    </location>
</feature>
<reference key="1">
    <citation type="journal article" date="1995" name="J. Bacteriol.">
        <title>Structure of the gluABCD cluster encoding the glutamate uptake system of Corynebacterium glutamicum.</title>
        <authorList>
            <person name="Kronemeyer W."/>
            <person name="Peekhaus N."/>
            <person name="Kraemer R."/>
            <person name="Sahm H."/>
            <person name="Eggeling L."/>
        </authorList>
    </citation>
    <scope>NUCLEOTIDE SEQUENCE [GENOMIC DNA]</scope>
    <scope>FUNCTION</scope>
    <scope>SUBUNIT</scope>
    <scope>DISRUPTION PHENOTYPE</scope>
    <source>
        <strain>ATCC 13032 / DSM 20300 / JCM 1318 / BCRC 11384 / CCUG 27702 / LMG 3730 / NBRC 12168 / NCIMB 10025 / NRRL B-2784 / 534</strain>
    </source>
</reference>
<reference key="2">
    <citation type="journal article" date="2003" name="Appl. Microbiol. Biotechnol.">
        <title>The Corynebacterium glutamicum genome: features and impacts on biotechnological processes.</title>
        <authorList>
            <person name="Ikeda M."/>
            <person name="Nakagawa S."/>
        </authorList>
    </citation>
    <scope>NUCLEOTIDE SEQUENCE [LARGE SCALE GENOMIC DNA]</scope>
    <source>
        <strain>ATCC 13032 / DSM 20300 / JCM 1318 / BCRC 11384 / CCUG 27702 / LMG 3730 / NBRC 12168 / NCIMB 10025 / NRRL B-2784 / 534</strain>
    </source>
</reference>
<reference key="3">
    <citation type="journal article" date="2003" name="J. Biotechnol.">
        <title>The complete Corynebacterium glutamicum ATCC 13032 genome sequence and its impact on the production of L-aspartate-derived amino acids and vitamins.</title>
        <authorList>
            <person name="Kalinowski J."/>
            <person name="Bathe B."/>
            <person name="Bartels D."/>
            <person name="Bischoff N."/>
            <person name="Bott M."/>
            <person name="Burkovski A."/>
            <person name="Dusch N."/>
            <person name="Eggeling L."/>
            <person name="Eikmanns B.J."/>
            <person name="Gaigalat L."/>
            <person name="Goesmann A."/>
            <person name="Hartmann M."/>
            <person name="Huthmacher K."/>
            <person name="Kraemer R."/>
            <person name="Linke B."/>
            <person name="McHardy A.C."/>
            <person name="Meyer F."/>
            <person name="Moeckel B."/>
            <person name="Pfefferle W."/>
            <person name="Puehler A."/>
            <person name="Rey D.A."/>
            <person name="Rueckert C."/>
            <person name="Rupp O."/>
            <person name="Sahm H."/>
            <person name="Wendisch V.F."/>
            <person name="Wiegraebe I."/>
            <person name="Tauch A."/>
        </authorList>
    </citation>
    <scope>NUCLEOTIDE SEQUENCE [LARGE SCALE GENOMIC DNA]</scope>
    <source>
        <strain>ATCC 13032 / DSM 20300 / JCM 1318 / BCRC 11384 / CCUG 27702 / LMG 3730 / NBRC 12168 / NCIMB 10025 / NRRL B-2784 / 534</strain>
    </source>
</reference>
<reference key="4">
    <citation type="journal article" date="2020" name="Int. J. Biol. Macromol.">
        <title>Structural features of the glutamate-binding protein from Corynebacterium glutamicum.</title>
        <authorList>
            <person name="Capo A."/>
            <person name="Natalello A."/>
            <person name="Marienhagen J."/>
            <person name="Pennacchio A."/>
            <person name="Camarca A."/>
            <person name="Di Giovanni S."/>
            <person name="Staiano M."/>
            <person name="D'Auria S."/>
            <person name="Varriale A."/>
        </authorList>
    </citation>
    <scope>FUNCTION</scope>
    <scope>ACTIVITY REGULATION</scope>
    <scope>IDENTIFICATION BY MASS SPECTROMETRY</scope>
</reference>
<reference key="5">
    <citation type="journal article" date="2013" name="Acta Crystallogr. F">
        <title>Expression, crystallization and preliminary crystallographic study of GluB from Corynebacterium glutamicum.</title>
        <authorList>
            <person name="Liu Q."/>
            <person name="Li D."/>
            <person name="Hu Y."/>
            <person name="Wang D.-C."/>
        </authorList>
    </citation>
    <scope>CRYSTALLIZATION</scope>
</reference>
<proteinExistence type="evidence at protein level"/>
<name>GLUB_CORGL</name>
<evidence type="ECO:0000255" key="1">
    <source>
        <dbReference type="PROSITE-ProRule" id="PRU00303"/>
    </source>
</evidence>
<evidence type="ECO:0000269" key="2">
    <source>
    </source>
</evidence>
<evidence type="ECO:0000269" key="3">
    <source>
    </source>
</evidence>
<evidence type="ECO:0000303" key="4">
    <source>
    </source>
</evidence>
<evidence type="ECO:0000303" key="5">
    <source>
    </source>
</evidence>
<evidence type="ECO:0000305" key="6"/>
<evidence type="ECO:0000305" key="7">
    <source>
    </source>
</evidence>
<sequence length="295" mass="31668">MSAKRTFTRIGAILGATALAGVTLTACGDSSGGDGFLAAIENGSVNVGTKYDQPGLGLRNPDNSMSGLDVDVAEYVVNSIADDKGWDHPTIEWRESPSAQRETLIQNGEVDMIAATYSINAGRSESVNFGGPYLLTHQALLVRQDDDRIETLEDLDNGLILCSVSGSTPAQKVKDVLPGVQLQEYDTYSSCVEALSQGNVDALTTDATILFGYSQQYEGDFRVVEMEKDGEPFTDEYYGIGLKKDDQEGTDAINAALERMYADGTFQRLLTENLGEDSVVVEEGTPGDLSFLDAS</sequence>
<keyword id="KW-0029">Amino-acid transport</keyword>
<keyword id="KW-1003">Cell membrane</keyword>
<keyword id="KW-0449">Lipoprotein</keyword>
<keyword id="KW-0472">Membrane</keyword>
<keyword id="KW-0564">Palmitate</keyword>
<keyword id="KW-1185">Reference proteome</keyword>
<keyword id="KW-0732">Signal</keyword>
<keyword id="KW-0813">Transport</keyword>
<organism>
    <name type="scientific">Corynebacterium glutamicum (strain ATCC 13032 / DSM 20300 / JCM 1318 / BCRC 11384 / CCUG 27702 / LMG 3730 / NBRC 12168 / NCIMB 10025 / NRRL B-2784 / 534)</name>
    <dbReference type="NCBI Taxonomy" id="196627"/>
    <lineage>
        <taxon>Bacteria</taxon>
        <taxon>Bacillati</taxon>
        <taxon>Actinomycetota</taxon>
        <taxon>Actinomycetes</taxon>
        <taxon>Mycobacteriales</taxon>
        <taxon>Corynebacteriaceae</taxon>
        <taxon>Corynebacterium</taxon>
    </lineage>
</organism>